<feature type="chain" id="PRO_0000093631" description="Weak toxin CM-9a">
    <location>
        <begin position="1"/>
        <end position="64"/>
    </location>
</feature>
<feature type="disulfide bond" evidence="2">
    <location>
        <begin position="3"/>
        <end position="24"/>
    </location>
</feature>
<feature type="disulfide bond" evidence="2">
    <location>
        <begin position="6"/>
        <end position="11"/>
    </location>
</feature>
<feature type="disulfide bond" evidence="2">
    <location>
        <begin position="17"/>
        <end position="41"/>
    </location>
</feature>
<feature type="disulfide bond" evidence="2">
    <location>
        <begin position="45"/>
        <end position="56"/>
    </location>
</feature>
<feature type="disulfide bond" evidence="2">
    <location>
        <begin position="57"/>
        <end position="62"/>
    </location>
</feature>
<feature type="sequence conflict" description="In Ref. 1; AA sequence." evidence="4" ref="1">
    <original>T</original>
    <variation>R</variation>
    <location>
        <position position="2"/>
    </location>
</feature>
<protein>
    <recommendedName>
        <fullName>Weak toxin CM-9a</fullName>
    </recommendedName>
</protein>
<organism>
    <name type="scientific">Naja kaouthia</name>
    <name type="common">Monocled cobra</name>
    <name type="synonym">Naja siamensis</name>
    <dbReference type="NCBI Taxonomy" id="8649"/>
    <lineage>
        <taxon>Eukaryota</taxon>
        <taxon>Metazoa</taxon>
        <taxon>Chordata</taxon>
        <taxon>Craniata</taxon>
        <taxon>Vertebrata</taxon>
        <taxon>Euteleostomi</taxon>
        <taxon>Lepidosauria</taxon>
        <taxon>Squamata</taxon>
        <taxon>Bifurcata</taxon>
        <taxon>Unidentata</taxon>
        <taxon>Episquamata</taxon>
        <taxon>Toxicofera</taxon>
        <taxon>Serpentes</taxon>
        <taxon>Colubroidea</taxon>
        <taxon>Elapidae</taxon>
        <taxon>Elapinae</taxon>
        <taxon>Naja</taxon>
    </lineage>
</organism>
<reference key="1">
    <citation type="journal article" date="1980" name="Hoppe-Seyler's Z. Physiol. Chem.">
        <title>Snake venoms. The amino acid sequences of two Melanoleuca-type toxins.</title>
        <authorList>
            <person name="Joubert F.J."/>
            <person name="Taljaard N."/>
        </authorList>
    </citation>
    <scope>PROTEIN SEQUENCE</scope>
    <scope>TOXIC DOSE</scope>
    <scope>SUBCELLULAR LOCATION</scope>
    <source>
        <tissue>Venom</tissue>
    </source>
</reference>
<evidence type="ECO:0000250" key="1">
    <source>
        <dbReference type="UniProtKB" id="O42255"/>
    </source>
</evidence>
<evidence type="ECO:0000250" key="2">
    <source>
        <dbReference type="UniProtKB" id="Q8AY51"/>
    </source>
</evidence>
<evidence type="ECO:0000269" key="3">
    <source>
    </source>
</evidence>
<evidence type="ECO:0000305" key="4"/>
<name>3NO29_NAJKA</name>
<keyword id="KW-0903">Direct protein sequencing</keyword>
<keyword id="KW-1015">Disulfide bond</keyword>
<keyword id="KW-0964">Secreted</keyword>
<keyword id="KW-0800">Toxin</keyword>
<comment type="function">
    <text evidence="1">Binds with low affinity to muscular (alpha-1-beta-1-delta-epsilon/CHRNA1-CHRNB1-CHRND-CHRNE) and very low affinity to neuronal (alpha-7/CHRNA7) nicotinic acetylcholine receptor (nAChR).</text>
</comment>
<comment type="subcellular location">
    <subcellularLocation>
        <location evidence="3">Secreted</location>
    </subcellularLocation>
</comment>
<comment type="tissue specificity">
    <text evidence="4">Expressed by the venom gland.</text>
</comment>
<comment type="toxic dose">
    <text evidence="3">LD(50) is 82 mg/kg by intravenous injection.</text>
</comment>
<comment type="similarity">
    <text evidence="4">Belongs to the three-finger toxin family. Ancestral subfamily. Orphan group II sub-subfamily.</text>
</comment>
<accession>P25679</accession>
<dbReference type="BMRB" id="P25679"/>
<dbReference type="SMR" id="P25679"/>
<dbReference type="GO" id="GO:0005576">
    <property type="term" value="C:extracellular region"/>
    <property type="evidence" value="ECO:0007669"/>
    <property type="project" value="UniProtKB-SubCell"/>
</dbReference>
<dbReference type="GO" id="GO:0090729">
    <property type="term" value="F:toxin activity"/>
    <property type="evidence" value="ECO:0007669"/>
    <property type="project" value="UniProtKB-KW"/>
</dbReference>
<dbReference type="CDD" id="cd00206">
    <property type="entry name" value="TFP_snake_toxin"/>
    <property type="match status" value="1"/>
</dbReference>
<dbReference type="FunFam" id="2.10.60.10:FF:000024">
    <property type="entry name" value="Cytotoxin 1"/>
    <property type="match status" value="1"/>
</dbReference>
<dbReference type="Gene3D" id="2.10.60.10">
    <property type="entry name" value="CD59"/>
    <property type="match status" value="1"/>
</dbReference>
<dbReference type="InterPro" id="IPR003571">
    <property type="entry name" value="Snake_3FTx"/>
</dbReference>
<dbReference type="InterPro" id="IPR045860">
    <property type="entry name" value="Snake_toxin-like_sf"/>
</dbReference>
<dbReference type="InterPro" id="IPR018354">
    <property type="entry name" value="Snake_toxin_con_site"/>
</dbReference>
<dbReference type="InterPro" id="IPR054131">
    <property type="entry name" value="Toxin_cobra-type"/>
</dbReference>
<dbReference type="Pfam" id="PF21947">
    <property type="entry name" value="Toxin_cobra-type"/>
    <property type="match status" value="1"/>
</dbReference>
<dbReference type="SUPFAM" id="SSF57302">
    <property type="entry name" value="Snake toxin-like"/>
    <property type="match status" value="1"/>
</dbReference>
<dbReference type="PROSITE" id="PS00272">
    <property type="entry name" value="SNAKE_TOXIN"/>
    <property type="match status" value="1"/>
</dbReference>
<sequence length="64" mass="7438">LTCLNCPEMFCGKFQICRNGEKICFKKLHQRRPLSRYIRGCADTCPVGYPKEMIECCSTDKCNR</sequence>
<proteinExistence type="evidence at protein level"/>